<comment type="function">
    <text evidence="1">Catalytic subunit of the periplasmic nitrate reductase complex NapAB. Receives electrons from NapB and catalyzes the reduction of nitrate to nitrite.</text>
</comment>
<comment type="catalytic activity">
    <reaction evidence="1">
        <text>2 Fe(II)-[cytochrome] + nitrate + 2 H(+) = 2 Fe(III)-[cytochrome] + nitrite + H2O</text>
        <dbReference type="Rhea" id="RHEA:12909"/>
        <dbReference type="Rhea" id="RHEA-COMP:11777"/>
        <dbReference type="Rhea" id="RHEA-COMP:11778"/>
        <dbReference type="ChEBI" id="CHEBI:15377"/>
        <dbReference type="ChEBI" id="CHEBI:15378"/>
        <dbReference type="ChEBI" id="CHEBI:16301"/>
        <dbReference type="ChEBI" id="CHEBI:17632"/>
        <dbReference type="ChEBI" id="CHEBI:29033"/>
        <dbReference type="ChEBI" id="CHEBI:29034"/>
        <dbReference type="EC" id="1.9.6.1"/>
    </reaction>
</comment>
<comment type="cofactor">
    <cofactor evidence="1">
        <name>[4Fe-4S] cluster</name>
        <dbReference type="ChEBI" id="CHEBI:49883"/>
    </cofactor>
    <text evidence="1">Binds 1 [4Fe-4S] cluster.</text>
</comment>
<comment type="cofactor">
    <cofactor evidence="1">
        <name>Mo-bis(molybdopterin guanine dinucleotide)</name>
        <dbReference type="ChEBI" id="CHEBI:60539"/>
    </cofactor>
    <text evidence="1">Binds 1 molybdenum-bis(molybdopterin guanine dinucleotide) (Mo-bis-MGD) cofactor per subunit.</text>
</comment>
<comment type="subunit">
    <text evidence="1">Component of the periplasmic nitrate reductase NapAB complex composed of NapA and NapB.</text>
</comment>
<comment type="subcellular location">
    <subcellularLocation>
        <location evidence="1">Periplasm</location>
    </subcellularLocation>
</comment>
<comment type="PTM">
    <text evidence="1">Predicted to be exported by the Tat system. The position of the signal peptide cleavage has not been experimentally proven.</text>
</comment>
<comment type="similarity">
    <text evidence="1">Belongs to the prokaryotic molybdopterin-containing oxidoreductase family. NasA/NapA/NarB subfamily.</text>
</comment>
<name>NAPA_ECTM1</name>
<feature type="signal peptide" description="Tat-type signal" evidence="1">
    <location>
        <begin position="1"/>
        <end position="29"/>
    </location>
</feature>
<feature type="chain" id="PRO_5000240716" description="Periplasmic nitrate reductase" evidence="1">
    <location>
        <begin position="30"/>
        <end position="834"/>
    </location>
</feature>
<feature type="domain" description="4Fe-4S Mo/W bis-MGD-type" evidence="1">
    <location>
        <begin position="41"/>
        <end position="97"/>
    </location>
</feature>
<feature type="binding site" evidence="1">
    <location>
        <position position="48"/>
    </location>
    <ligand>
        <name>[4Fe-4S] cluster</name>
        <dbReference type="ChEBI" id="CHEBI:49883"/>
    </ligand>
</feature>
<feature type="binding site" evidence="1">
    <location>
        <position position="51"/>
    </location>
    <ligand>
        <name>[4Fe-4S] cluster</name>
        <dbReference type="ChEBI" id="CHEBI:49883"/>
    </ligand>
</feature>
<feature type="binding site" evidence="1">
    <location>
        <position position="55"/>
    </location>
    <ligand>
        <name>[4Fe-4S] cluster</name>
        <dbReference type="ChEBI" id="CHEBI:49883"/>
    </ligand>
</feature>
<feature type="binding site" evidence="1">
    <location>
        <position position="83"/>
    </location>
    <ligand>
        <name>[4Fe-4S] cluster</name>
        <dbReference type="ChEBI" id="CHEBI:49883"/>
    </ligand>
</feature>
<feature type="binding site" evidence="1">
    <location>
        <position position="85"/>
    </location>
    <ligand>
        <name>Mo-bis(molybdopterin guanine dinucleotide)</name>
        <dbReference type="ChEBI" id="CHEBI:60539"/>
    </ligand>
</feature>
<feature type="binding site" evidence="1">
    <location>
        <position position="152"/>
    </location>
    <ligand>
        <name>Mo-bis(molybdopterin guanine dinucleotide)</name>
        <dbReference type="ChEBI" id="CHEBI:60539"/>
    </ligand>
</feature>
<feature type="binding site" evidence="1">
    <location>
        <position position="177"/>
    </location>
    <ligand>
        <name>Mo-bis(molybdopterin guanine dinucleotide)</name>
        <dbReference type="ChEBI" id="CHEBI:60539"/>
    </ligand>
</feature>
<feature type="binding site" evidence="1">
    <location>
        <position position="181"/>
    </location>
    <ligand>
        <name>Mo-bis(molybdopterin guanine dinucleotide)</name>
        <dbReference type="ChEBI" id="CHEBI:60539"/>
    </ligand>
</feature>
<feature type="binding site" evidence="1">
    <location>
        <begin position="214"/>
        <end position="221"/>
    </location>
    <ligand>
        <name>Mo-bis(molybdopterin guanine dinucleotide)</name>
        <dbReference type="ChEBI" id="CHEBI:60539"/>
    </ligand>
</feature>
<feature type="binding site" evidence="1">
    <location>
        <begin position="245"/>
        <end position="249"/>
    </location>
    <ligand>
        <name>Mo-bis(molybdopterin guanine dinucleotide)</name>
        <dbReference type="ChEBI" id="CHEBI:60539"/>
    </ligand>
</feature>
<feature type="binding site" evidence="1">
    <location>
        <begin position="264"/>
        <end position="266"/>
    </location>
    <ligand>
        <name>Mo-bis(molybdopterin guanine dinucleotide)</name>
        <dbReference type="ChEBI" id="CHEBI:60539"/>
    </ligand>
</feature>
<feature type="binding site" evidence="1">
    <location>
        <position position="375"/>
    </location>
    <ligand>
        <name>Mo-bis(molybdopterin guanine dinucleotide)</name>
        <dbReference type="ChEBI" id="CHEBI:60539"/>
    </ligand>
</feature>
<feature type="binding site" evidence="1">
    <location>
        <position position="379"/>
    </location>
    <ligand>
        <name>Mo-bis(molybdopterin guanine dinucleotide)</name>
        <dbReference type="ChEBI" id="CHEBI:60539"/>
    </ligand>
</feature>
<feature type="binding site" evidence="1">
    <location>
        <position position="485"/>
    </location>
    <ligand>
        <name>Mo-bis(molybdopterin guanine dinucleotide)</name>
        <dbReference type="ChEBI" id="CHEBI:60539"/>
    </ligand>
</feature>
<feature type="binding site" evidence="1">
    <location>
        <begin position="511"/>
        <end position="512"/>
    </location>
    <ligand>
        <name>Mo-bis(molybdopterin guanine dinucleotide)</name>
        <dbReference type="ChEBI" id="CHEBI:60539"/>
    </ligand>
</feature>
<feature type="binding site" evidence="1">
    <location>
        <position position="534"/>
    </location>
    <ligand>
        <name>Mo-bis(molybdopterin guanine dinucleotide)</name>
        <dbReference type="ChEBI" id="CHEBI:60539"/>
    </ligand>
</feature>
<feature type="binding site" evidence="1">
    <location>
        <position position="561"/>
    </location>
    <ligand>
        <name>Mo-bis(molybdopterin guanine dinucleotide)</name>
        <dbReference type="ChEBI" id="CHEBI:60539"/>
    </ligand>
</feature>
<feature type="binding site" evidence="1">
    <location>
        <begin position="721"/>
        <end position="730"/>
    </location>
    <ligand>
        <name>Mo-bis(molybdopterin guanine dinucleotide)</name>
        <dbReference type="ChEBI" id="CHEBI:60539"/>
    </ligand>
</feature>
<feature type="binding site" evidence="1">
    <location>
        <position position="797"/>
    </location>
    <ligand>
        <name>substrate</name>
    </ligand>
</feature>
<feature type="binding site" evidence="1">
    <location>
        <position position="805"/>
    </location>
    <ligand>
        <name>Mo-bis(molybdopterin guanine dinucleotide)</name>
        <dbReference type="ChEBI" id="CHEBI:60539"/>
    </ligand>
</feature>
<feature type="binding site" evidence="1">
    <location>
        <position position="822"/>
    </location>
    <ligand>
        <name>Mo-bis(molybdopterin guanine dinucleotide)</name>
        <dbReference type="ChEBI" id="CHEBI:60539"/>
    </ligand>
</feature>
<sequence>MKLSRREFAKANAAAIAAAAAGLPLASTASNLITEADMTRLDWNKAPCRFCGTGCSVMVATRDNRVVATHGDVKAEVNRGLNCVKGYFLSKIMYGVDRLTQPLLRMKNGVYDKQGEFQPVSWDQAFDIMAQKIKQAIAEQGPEAVGMFGSGQWTVWEGYAANKLMKAGFRSNNIDPNARHCMASAVMGFMRTFGMDEPMGCYDDIEAADAFVLWGSNMAEMHPILWSRVTDRRLSHPNTRVAVLSTFEHRSFDLADIPLVFKPQTDLLILNYIANHIIESGAVNKDFVGKHTKFARGADDIGYGLRADNPLEMQAKNAAKANTWEDMSFEQFAAFVKPYTLERTAKESGVAAERLKALAKLYADPKRKVMSFWTMGFNQHTRGVWANNLIYNLHLLTGKISEPGNSPFSLTGQPSACGTAREVGTFSHRLPADMLVANPKHRETAEKIWKLPPGTIQEKPGFHAVEQSRKLKDGVLKVYWTQVSNNMQAGPNVMQEILPGWRNPQAFVIVSDVYPTVSAQAADLILPSAMWVEKEGAYGNAERRTQFWHQLVKAPGEAKSDLWQLVEFSKRFTTDEVWPAELLAKAPDYKGKTLYQVLFANGQVDQFPSEQIEAGYANDEAEAFGFYLQKGLFEEYARFGRGHAHDLAPFDSYHAERGLRWPVVDGKETRWRYREGHDPYVEKGSGVQFYGYPDKRALIFALPYEPPAEAPDDEFPFWLSTGRVLEHWHTGSMTQRVEELHGAVPDALVYMHPDDAKALKARRGSEVKVISRRGEIRARIETRGRNKPPRGLVFVPFFDANKLINKVTLDATDPISKQTDYKKCAVKIELVSLA</sequence>
<protein>
    <recommendedName>
        <fullName evidence="1">Periplasmic nitrate reductase</fullName>
        <ecNumber evidence="1">1.9.6.1</ecNumber>
    </recommendedName>
</protein>
<gene>
    <name evidence="1" type="primary">napA</name>
    <name type="ordered locus">Pmen_2981</name>
</gene>
<accession>A4XWM0</accession>
<evidence type="ECO:0000255" key="1">
    <source>
        <dbReference type="HAMAP-Rule" id="MF_01630"/>
    </source>
</evidence>
<proteinExistence type="inferred from homology"/>
<reference key="1">
    <citation type="submission" date="2007-04" db="EMBL/GenBank/DDBJ databases">
        <title>Complete sequence of Pseudomonas mendocina ymp.</title>
        <authorList>
            <consortium name="US DOE Joint Genome Institute"/>
            <person name="Copeland A."/>
            <person name="Lucas S."/>
            <person name="Lapidus A."/>
            <person name="Barry K."/>
            <person name="Glavina del Rio T."/>
            <person name="Dalin E."/>
            <person name="Tice H."/>
            <person name="Pitluck S."/>
            <person name="Kiss H."/>
            <person name="Brettin T."/>
            <person name="Detter J.C."/>
            <person name="Bruce D."/>
            <person name="Han C."/>
            <person name="Schmutz J."/>
            <person name="Larimer F."/>
            <person name="Land M."/>
            <person name="Hauser L."/>
            <person name="Kyrpides N."/>
            <person name="Mikhailova N."/>
            <person name="Hersman L."/>
            <person name="Dubois J."/>
            <person name="Maurice P."/>
            <person name="Richardson P."/>
        </authorList>
    </citation>
    <scope>NUCLEOTIDE SEQUENCE [LARGE SCALE GENOMIC DNA]</scope>
    <source>
        <strain>ymp</strain>
    </source>
</reference>
<keyword id="KW-0004">4Fe-4S</keyword>
<keyword id="KW-0249">Electron transport</keyword>
<keyword id="KW-0408">Iron</keyword>
<keyword id="KW-0411">Iron-sulfur</keyword>
<keyword id="KW-0479">Metal-binding</keyword>
<keyword id="KW-0500">Molybdenum</keyword>
<keyword id="KW-0534">Nitrate assimilation</keyword>
<keyword id="KW-0560">Oxidoreductase</keyword>
<keyword id="KW-0574">Periplasm</keyword>
<keyword id="KW-0732">Signal</keyword>
<keyword id="KW-0813">Transport</keyword>
<organism>
    <name type="scientific">Ectopseudomonas mendocina (strain ymp)</name>
    <name type="common">Pseudomonas mendocina</name>
    <dbReference type="NCBI Taxonomy" id="399739"/>
    <lineage>
        <taxon>Bacteria</taxon>
        <taxon>Pseudomonadati</taxon>
        <taxon>Pseudomonadota</taxon>
        <taxon>Gammaproteobacteria</taxon>
        <taxon>Pseudomonadales</taxon>
        <taxon>Pseudomonadaceae</taxon>
        <taxon>Ectopseudomonas</taxon>
    </lineage>
</organism>
<dbReference type="EC" id="1.9.6.1" evidence="1"/>
<dbReference type="EMBL" id="CP000680">
    <property type="protein sequence ID" value="ABP85736.1"/>
    <property type="molecule type" value="Genomic_DNA"/>
</dbReference>
<dbReference type="SMR" id="A4XWM0"/>
<dbReference type="STRING" id="399739.Pmen_2981"/>
<dbReference type="KEGG" id="pmy:Pmen_2981"/>
<dbReference type="PATRIC" id="fig|399739.8.peg.3026"/>
<dbReference type="eggNOG" id="COG0243">
    <property type="taxonomic scope" value="Bacteria"/>
</dbReference>
<dbReference type="HOGENOM" id="CLU_000422_13_4_6"/>
<dbReference type="OrthoDB" id="9810782at2"/>
<dbReference type="GO" id="GO:0016020">
    <property type="term" value="C:membrane"/>
    <property type="evidence" value="ECO:0007669"/>
    <property type="project" value="TreeGrafter"/>
</dbReference>
<dbReference type="GO" id="GO:0009325">
    <property type="term" value="C:nitrate reductase complex"/>
    <property type="evidence" value="ECO:0007669"/>
    <property type="project" value="TreeGrafter"/>
</dbReference>
<dbReference type="GO" id="GO:0042597">
    <property type="term" value="C:periplasmic space"/>
    <property type="evidence" value="ECO:0007669"/>
    <property type="project" value="UniProtKB-SubCell"/>
</dbReference>
<dbReference type="GO" id="GO:0051539">
    <property type="term" value="F:4 iron, 4 sulfur cluster binding"/>
    <property type="evidence" value="ECO:0007669"/>
    <property type="project" value="UniProtKB-KW"/>
</dbReference>
<dbReference type="GO" id="GO:0009055">
    <property type="term" value="F:electron transfer activity"/>
    <property type="evidence" value="ECO:0007669"/>
    <property type="project" value="UniProtKB-UniRule"/>
</dbReference>
<dbReference type="GO" id="GO:0005506">
    <property type="term" value="F:iron ion binding"/>
    <property type="evidence" value="ECO:0007669"/>
    <property type="project" value="UniProtKB-UniRule"/>
</dbReference>
<dbReference type="GO" id="GO:0030151">
    <property type="term" value="F:molybdenum ion binding"/>
    <property type="evidence" value="ECO:0007669"/>
    <property type="project" value="InterPro"/>
</dbReference>
<dbReference type="GO" id="GO:0043546">
    <property type="term" value="F:molybdopterin cofactor binding"/>
    <property type="evidence" value="ECO:0007669"/>
    <property type="project" value="InterPro"/>
</dbReference>
<dbReference type="GO" id="GO:0050140">
    <property type="term" value="F:nitrate reductase (cytochrome) activity"/>
    <property type="evidence" value="ECO:0007669"/>
    <property type="project" value="UniProtKB-EC"/>
</dbReference>
<dbReference type="GO" id="GO:0045333">
    <property type="term" value="P:cellular respiration"/>
    <property type="evidence" value="ECO:0007669"/>
    <property type="project" value="UniProtKB-ARBA"/>
</dbReference>
<dbReference type="GO" id="GO:0006777">
    <property type="term" value="P:Mo-molybdopterin cofactor biosynthetic process"/>
    <property type="evidence" value="ECO:0007669"/>
    <property type="project" value="UniProtKB-UniRule"/>
</dbReference>
<dbReference type="GO" id="GO:0042128">
    <property type="term" value="P:nitrate assimilation"/>
    <property type="evidence" value="ECO:0007669"/>
    <property type="project" value="UniProtKB-UniRule"/>
</dbReference>
<dbReference type="CDD" id="cd02791">
    <property type="entry name" value="MopB_CT_Nitrate-R-NapA-like"/>
    <property type="match status" value="1"/>
</dbReference>
<dbReference type="CDD" id="cd02754">
    <property type="entry name" value="MopB_Nitrate-R-NapA-like"/>
    <property type="match status" value="1"/>
</dbReference>
<dbReference type="FunFam" id="2.40.40.20:FF:000005">
    <property type="entry name" value="Periplasmic nitrate reductase"/>
    <property type="match status" value="1"/>
</dbReference>
<dbReference type="Gene3D" id="2.40.40.20">
    <property type="match status" value="1"/>
</dbReference>
<dbReference type="Gene3D" id="3.30.200.210">
    <property type="match status" value="1"/>
</dbReference>
<dbReference type="Gene3D" id="3.40.50.740">
    <property type="match status" value="1"/>
</dbReference>
<dbReference type="Gene3D" id="3.40.228.10">
    <property type="entry name" value="Dimethylsulfoxide Reductase, domain 2"/>
    <property type="match status" value="1"/>
</dbReference>
<dbReference type="HAMAP" id="MF_01630">
    <property type="entry name" value="Nitrate_reduct_NapA"/>
    <property type="match status" value="1"/>
</dbReference>
<dbReference type="InterPro" id="IPR009010">
    <property type="entry name" value="Asp_de-COase-like_dom_sf"/>
</dbReference>
<dbReference type="InterPro" id="IPR041957">
    <property type="entry name" value="CT_Nitrate-R-NapA-like"/>
</dbReference>
<dbReference type="InterPro" id="IPR006657">
    <property type="entry name" value="MoPterin_dinucl-bd_dom"/>
</dbReference>
<dbReference type="InterPro" id="IPR006656">
    <property type="entry name" value="Mopterin_OxRdtase"/>
</dbReference>
<dbReference type="InterPro" id="IPR006963">
    <property type="entry name" value="Mopterin_OxRdtase_4Fe-4S_dom"/>
</dbReference>
<dbReference type="InterPro" id="IPR027467">
    <property type="entry name" value="MopterinOxRdtase_cofactor_BS"/>
</dbReference>
<dbReference type="InterPro" id="IPR010051">
    <property type="entry name" value="Periplasm_NO3_reductase_lsu"/>
</dbReference>
<dbReference type="InterPro" id="IPR050123">
    <property type="entry name" value="Prok_molybdopt-oxidoreductase"/>
</dbReference>
<dbReference type="InterPro" id="IPR006311">
    <property type="entry name" value="TAT_signal"/>
</dbReference>
<dbReference type="NCBIfam" id="TIGR01706">
    <property type="entry name" value="NAPA"/>
    <property type="match status" value="1"/>
</dbReference>
<dbReference type="NCBIfam" id="NF010055">
    <property type="entry name" value="PRK13532.1"/>
    <property type="match status" value="1"/>
</dbReference>
<dbReference type="PANTHER" id="PTHR43105:SF11">
    <property type="entry name" value="PERIPLASMIC NITRATE REDUCTASE"/>
    <property type="match status" value="1"/>
</dbReference>
<dbReference type="PANTHER" id="PTHR43105">
    <property type="entry name" value="RESPIRATORY NITRATE REDUCTASE"/>
    <property type="match status" value="1"/>
</dbReference>
<dbReference type="Pfam" id="PF04879">
    <property type="entry name" value="Molybdop_Fe4S4"/>
    <property type="match status" value="1"/>
</dbReference>
<dbReference type="Pfam" id="PF00384">
    <property type="entry name" value="Molybdopterin"/>
    <property type="match status" value="1"/>
</dbReference>
<dbReference type="Pfam" id="PF01568">
    <property type="entry name" value="Molydop_binding"/>
    <property type="match status" value="1"/>
</dbReference>
<dbReference type="SMART" id="SM00926">
    <property type="entry name" value="Molybdop_Fe4S4"/>
    <property type="match status" value="1"/>
</dbReference>
<dbReference type="SUPFAM" id="SSF50692">
    <property type="entry name" value="ADC-like"/>
    <property type="match status" value="1"/>
</dbReference>
<dbReference type="SUPFAM" id="SSF53706">
    <property type="entry name" value="Formate dehydrogenase/DMSO reductase, domains 1-3"/>
    <property type="match status" value="1"/>
</dbReference>
<dbReference type="PROSITE" id="PS51669">
    <property type="entry name" value="4FE4S_MOW_BIS_MGD"/>
    <property type="match status" value="1"/>
</dbReference>
<dbReference type="PROSITE" id="PS00551">
    <property type="entry name" value="MOLYBDOPTERIN_PROK_1"/>
    <property type="match status" value="1"/>
</dbReference>
<dbReference type="PROSITE" id="PS51318">
    <property type="entry name" value="TAT"/>
    <property type="match status" value="1"/>
</dbReference>